<feature type="chain" id="PRO_1000215611" description="Bifunctional protein FolD">
    <location>
        <begin position="1"/>
        <end position="283"/>
    </location>
</feature>
<feature type="binding site" evidence="1">
    <location>
        <begin position="165"/>
        <end position="167"/>
    </location>
    <ligand>
        <name>NADP(+)</name>
        <dbReference type="ChEBI" id="CHEBI:58349"/>
    </ligand>
</feature>
<feature type="binding site" evidence="1">
    <location>
        <position position="190"/>
    </location>
    <ligand>
        <name>NADP(+)</name>
        <dbReference type="ChEBI" id="CHEBI:58349"/>
    </ligand>
</feature>
<protein>
    <recommendedName>
        <fullName evidence="1">Bifunctional protein FolD</fullName>
    </recommendedName>
    <domain>
        <recommendedName>
            <fullName evidence="1">Methylenetetrahydrofolate dehydrogenase</fullName>
            <ecNumber evidence="1">1.5.1.5</ecNumber>
        </recommendedName>
    </domain>
    <domain>
        <recommendedName>
            <fullName evidence="1">Methenyltetrahydrofolate cyclohydrolase</fullName>
            <ecNumber evidence="1">3.5.4.9</ecNumber>
        </recommendedName>
    </domain>
</protein>
<gene>
    <name evidence="1" type="primary">folD</name>
    <name type="ordered locus">Vapar_2159</name>
</gene>
<organism>
    <name type="scientific">Variovorax paradoxus (strain S110)</name>
    <dbReference type="NCBI Taxonomy" id="543728"/>
    <lineage>
        <taxon>Bacteria</taxon>
        <taxon>Pseudomonadati</taxon>
        <taxon>Pseudomonadota</taxon>
        <taxon>Betaproteobacteria</taxon>
        <taxon>Burkholderiales</taxon>
        <taxon>Comamonadaceae</taxon>
        <taxon>Variovorax</taxon>
    </lineage>
</organism>
<keyword id="KW-0028">Amino-acid biosynthesis</keyword>
<keyword id="KW-0368">Histidine biosynthesis</keyword>
<keyword id="KW-0378">Hydrolase</keyword>
<keyword id="KW-0486">Methionine biosynthesis</keyword>
<keyword id="KW-0511">Multifunctional enzyme</keyword>
<keyword id="KW-0521">NADP</keyword>
<keyword id="KW-0554">One-carbon metabolism</keyword>
<keyword id="KW-0560">Oxidoreductase</keyword>
<keyword id="KW-0658">Purine biosynthesis</keyword>
<comment type="function">
    <text evidence="1">Catalyzes the oxidation of 5,10-methylenetetrahydrofolate to 5,10-methenyltetrahydrofolate and then the hydrolysis of 5,10-methenyltetrahydrofolate to 10-formyltetrahydrofolate.</text>
</comment>
<comment type="catalytic activity">
    <reaction evidence="1">
        <text>(6R)-5,10-methylene-5,6,7,8-tetrahydrofolate + NADP(+) = (6R)-5,10-methenyltetrahydrofolate + NADPH</text>
        <dbReference type="Rhea" id="RHEA:22812"/>
        <dbReference type="ChEBI" id="CHEBI:15636"/>
        <dbReference type="ChEBI" id="CHEBI:57455"/>
        <dbReference type="ChEBI" id="CHEBI:57783"/>
        <dbReference type="ChEBI" id="CHEBI:58349"/>
        <dbReference type="EC" id="1.5.1.5"/>
    </reaction>
</comment>
<comment type="catalytic activity">
    <reaction evidence="1">
        <text>(6R)-5,10-methenyltetrahydrofolate + H2O = (6R)-10-formyltetrahydrofolate + H(+)</text>
        <dbReference type="Rhea" id="RHEA:23700"/>
        <dbReference type="ChEBI" id="CHEBI:15377"/>
        <dbReference type="ChEBI" id="CHEBI:15378"/>
        <dbReference type="ChEBI" id="CHEBI:57455"/>
        <dbReference type="ChEBI" id="CHEBI:195366"/>
        <dbReference type="EC" id="3.5.4.9"/>
    </reaction>
</comment>
<comment type="pathway">
    <text evidence="1">One-carbon metabolism; tetrahydrofolate interconversion.</text>
</comment>
<comment type="subunit">
    <text evidence="1">Homodimer.</text>
</comment>
<comment type="similarity">
    <text evidence="1">Belongs to the tetrahydrofolate dehydrogenase/cyclohydrolase family.</text>
</comment>
<dbReference type="EC" id="1.5.1.5" evidence="1"/>
<dbReference type="EC" id="3.5.4.9" evidence="1"/>
<dbReference type="EMBL" id="CP001635">
    <property type="protein sequence ID" value="ACS18794.1"/>
    <property type="molecule type" value="Genomic_DNA"/>
</dbReference>
<dbReference type="SMR" id="C5CXD8"/>
<dbReference type="STRING" id="543728.Vapar_2159"/>
<dbReference type="KEGG" id="vap:Vapar_2159"/>
<dbReference type="eggNOG" id="COG0190">
    <property type="taxonomic scope" value="Bacteria"/>
</dbReference>
<dbReference type="HOGENOM" id="CLU_034045_2_1_4"/>
<dbReference type="OrthoDB" id="9803580at2"/>
<dbReference type="UniPathway" id="UPA00193"/>
<dbReference type="GO" id="GO:0005829">
    <property type="term" value="C:cytosol"/>
    <property type="evidence" value="ECO:0007669"/>
    <property type="project" value="TreeGrafter"/>
</dbReference>
<dbReference type="GO" id="GO:0004477">
    <property type="term" value="F:methenyltetrahydrofolate cyclohydrolase activity"/>
    <property type="evidence" value="ECO:0007669"/>
    <property type="project" value="UniProtKB-UniRule"/>
</dbReference>
<dbReference type="GO" id="GO:0004488">
    <property type="term" value="F:methylenetetrahydrofolate dehydrogenase (NADP+) activity"/>
    <property type="evidence" value="ECO:0007669"/>
    <property type="project" value="UniProtKB-UniRule"/>
</dbReference>
<dbReference type="GO" id="GO:0000105">
    <property type="term" value="P:L-histidine biosynthetic process"/>
    <property type="evidence" value="ECO:0007669"/>
    <property type="project" value="UniProtKB-KW"/>
</dbReference>
<dbReference type="GO" id="GO:0009086">
    <property type="term" value="P:methionine biosynthetic process"/>
    <property type="evidence" value="ECO:0007669"/>
    <property type="project" value="UniProtKB-KW"/>
</dbReference>
<dbReference type="GO" id="GO:0006164">
    <property type="term" value="P:purine nucleotide biosynthetic process"/>
    <property type="evidence" value="ECO:0007669"/>
    <property type="project" value="UniProtKB-KW"/>
</dbReference>
<dbReference type="GO" id="GO:0035999">
    <property type="term" value="P:tetrahydrofolate interconversion"/>
    <property type="evidence" value="ECO:0007669"/>
    <property type="project" value="UniProtKB-UniRule"/>
</dbReference>
<dbReference type="CDD" id="cd01080">
    <property type="entry name" value="NAD_bind_m-THF_DH_Cyclohyd"/>
    <property type="match status" value="1"/>
</dbReference>
<dbReference type="FunFam" id="3.40.50.720:FF:000094">
    <property type="entry name" value="Bifunctional protein FolD"/>
    <property type="match status" value="1"/>
</dbReference>
<dbReference type="FunFam" id="3.40.50.10860:FF:000005">
    <property type="entry name" value="C-1-tetrahydrofolate synthase, cytoplasmic, putative"/>
    <property type="match status" value="1"/>
</dbReference>
<dbReference type="Gene3D" id="3.40.50.10860">
    <property type="entry name" value="Leucine Dehydrogenase, chain A, domain 1"/>
    <property type="match status" value="1"/>
</dbReference>
<dbReference type="Gene3D" id="3.40.50.720">
    <property type="entry name" value="NAD(P)-binding Rossmann-like Domain"/>
    <property type="match status" value="1"/>
</dbReference>
<dbReference type="HAMAP" id="MF_01576">
    <property type="entry name" value="THF_DHG_CYH"/>
    <property type="match status" value="1"/>
</dbReference>
<dbReference type="InterPro" id="IPR046346">
    <property type="entry name" value="Aminoacid_DH-like_N_sf"/>
</dbReference>
<dbReference type="InterPro" id="IPR036291">
    <property type="entry name" value="NAD(P)-bd_dom_sf"/>
</dbReference>
<dbReference type="InterPro" id="IPR000672">
    <property type="entry name" value="THF_DH/CycHdrlase"/>
</dbReference>
<dbReference type="InterPro" id="IPR020630">
    <property type="entry name" value="THF_DH/CycHdrlase_cat_dom"/>
</dbReference>
<dbReference type="InterPro" id="IPR020631">
    <property type="entry name" value="THF_DH/CycHdrlase_NAD-bd_dom"/>
</dbReference>
<dbReference type="NCBIfam" id="NF008058">
    <property type="entry name" value="PRK10792.1"/>
    <property type="match status" value="1"/>
</dbReference>
<dbReference type="NCBIfam" id="NF010786">
    <property type="entry name" value="PRK14189.1"/>
    <property type="match status" value="1"/>
</dbReference>
<dbReference type="PANTHER" id="PTHR48099:SF5">
    <property type="entry name" value="C-1-TETRAHYDROFOLATE SYNTHASE, CYTOPLASMIC"/>
    <property type="match status" value="1"/>
</dbReference>
<dbReference type="PANTHER" id="PTHR48099">
    <property type="entry name" value="C-1-TETRAHYDROFOLATE SYNTHASE, CYTOPLASMIC-RELATED"/>
    <property type="match status" value="1"/>
</dbReference>
<dbReference type="Pfam" id="PF00763">
    <property type="entry name" value="THF_DHG_CYH"/>
    <property type="match status" value="1"/>
</dbReference>
<dbReference type="Pfam" id="PF02882">
    <property type="entry name" value="THF_DHG_CYH_C"/>
    <property type="match status" value="1"/>
</dbReference>
<dbReference type="PRINTS" id="PR00085">
    <property type="entry name" value="THFDHDRGNASE"/>
</dbReference>
<dbReference type="SUPFAM" id="SSF53223">
    <property type="entry name" value="Aminoacid dehydrogenase-like, N-terminal domain"/>
    <property type="match status" value="1"/>
</dbReference>
<dbReference type="SUPFAM" id="SSF51735">
    <property type="entry name" value="NAD(P)-binding Rossmann-fold domains"/>
    <property type="match status" value="1"/>
</dbReference>
<accession>C5CXD8</accession>
<evidence type="ECO:0000255" key="1">
    <source>
        <dbReference type="HAMAP-Rule" id="MF_01576"/>
    </source>
</evidence>
<reference key="1">
    <citation type="journal article" date="2011" name="J. Bacteriol.">
        <title>Complete genome sequence of the metabolically versatile plant growth-promoting endophyte, Variovorax paradoxus S110.</title>
        <authorList>
            <person name="Han J.I."/>
            <person name="Choi H.K."/>
            <person name="Lee S.W."/>
            <person name="Orwin P.M."/>
            <person name="Kim J."/>
            <person name="Laroe S.L."/>
            <person name="Kim T.G."/>
            <person name="O'Neil J."/>
            <person name="Leadbetter J.R."/>
            <person name="Lee S.Y."/>
            <person name="Hur C.G."/>
            <person name="Spain J.C."/>
            <person name="Ovchinnikova G."/>
            <person name="Goodwin L."/>
            <person name="Han C."/>
        </authorList>
    </citation>
    <scope>NUCLEOTIDE SEQUENCE [LARGE SCALE GENOMIC DNA]</scope>
    <source>
        <strain>S110</strain>
    </source>
</reference>
<name>FOLD_VARPS</name>
<proteinExistence type="inferred from homology"/>
<sequence length="283" mass="29691">MTAQLIDGNALAKTIRAEVAGRTAALKAKGVEPALSIILVGSDPASQVYTKHKVNDSTETGLAATLETYPADMSEAALLDRIRALNDDPKVHGILVQLPLPRHMDSQKVIETISPAKDVDGFHVASAGALMTGAPGFWPCTPYGCMKMLESIGYDLRGKHAVVIGRSNIVGKPMAMMLLARSATVTICHSATQDLAAFTRQADVIVAAVGKRNILTAGMVKPGAVVIDVGMNRKEDGKLAGDVDFDGVKEVAGWITPVPGGVGPMTRAMLLVNTLEAAERAAK</sequence>